<name>APTH1_MYCMD</name>
<sequence length="240" mass="25981">MSVLKTLVINPRSGVKPTATLFFLHGLGDSSAGWSDVAQMLSQRPSLSHVRFVLPNAPIQPVTLNMGMPMPSWFDILALDDLSGAEDEAGLLKSTDEIKKLIKAENDGTAKDLDGHKIPSERIVVGGFSQGGAISLLTGLTNPTPVAGVAALSTWLPLRAKIATLRTPTSKTLKVFQAHGDADPVVKYEYGQRTVDFLKNELALNDKDVEFHTYPRMPHSACPEEIRDLAAFLEKVIPAQ</sequence>
<feature type="chain" id="PRO_0000229013" description="Acyl-protein thioesterase 1">
    <location>
        <begin position="1"/>
        <end position="240"/>
    </location>
</feature>
<feature type="active site" description="Charge relay system" evidence="1">
    <location>
        <position position="129"/>
    </location>
</feature>
<feature type="active site" description="Charge relay system" evidence="1">
    <location>
        <position position="183"/>
    </location>
</feature>
<feature type="active site" description="Charge relay system" evidence="1">
    <location>
        <position position="219"/>
    </location>
</feature>
<accession>Q4PID3</accession>
<accession>A0A0D1EBH2</accession>
<proteinExistence type="inferred from homology"/>
<organism>
    <name type="scientific">Mycosarcoma maydis</name>
    <name type="common">Corn smut fungus</name>
    <name type="synonym">Ustilago maydis</name>
    <dbReference type="NCBI Taxonomy" id="5270"/>
    <lineage>
        <taxon>Eukaryota</taxon>
        <taxon>Fungi</taxon>
        <taxon>Dikarya</taxon>
        <taxon>Basidiomycota</taxon>
        <taxon>Ustilaginomycotina</taxon>
        <taxon>Ustilaginomycetes</taxon>
        <taxon>Ustilaginales</taxon>
        <taxon>Ustilaginaceae</taxon>
        <taxon>Mycosarcoma</taxon>
    </lineage>
</organism>
<keyword id="KW-0963">Cytoplasm</keyword>
<keyword id="KW-0276">Fatty acid metabolism</keyword>
<keyword id="KW-0378">Hydrolase</keyword>
<keyword id="KW-0443">Lipid metabolism</keyword>
<keyword id="KW-0539">Nucleus</keyword>
<keyword id="KW-1185">Reference proteome</keyword>
<keyword id="KW-0719">Serine esterase</keyword>
<dbReference type="EC" id="3.1.2.-" evidence="2"/>
<dbReference type="EC" id="3.1.2.22" evidence="2"/>
<dbReference type="EMBL" id="CM003140">
    <property type="protein sequence ID" value="KIS71690.1"/>
    <property type="molecule type" value="Genomic_DNA"/>
</dbReference>
<dbReference type="RefSeq" id="XP_011386086.1">
    <property type="nucleotide sequence ID" value="XM_011387784.1"/>
</dbReference>
<dbReference type="SMR" id="Q4PID3"/>
<dbReference type="FunCoup" id="Q4PID3">
    <property type="interactions" value="324"/>
</dbReference>
<dbReference type="STRING" id="237631.Q4PID3"/>
<dbReference type="ESTHER" id="ustma-apth1">
    <property type="family name" value="LYsophospholipase_carboxylesterase"/>
</dbReference>
<dbReference type="EnsemblFungi" id="KIS71690">
    <property type="protein sequence ID" value="KIS71690"/>
    <property type="gene ID" value="UMAG_00130"/>
</dbReference>
<dbReference type="GeneID" id="23561520"/>
<dbReference type="KEGG" id="uma:UMAG_00130"/>
<dbReference type="VEuPathDB" id="FungiDB:UMAG_00130"/>
<dbReference type="eggNOG" id="KOG2112">
    <property type="taxonomic scope" value="Eukaryota"/>
</dbReference>
<dbReference type="HOGENOM" id="CLU_049413_3_5_1"/>
<dbReference type="InParanoid" id="Q4PID3"/>
<dbReference type="OMA" id="WYDILAM"/>
<dbReference type="OrthoDB" id="2418081at2759"/>
<dbReference type="Proteomes" id="UP000000561">
    <property type="component" value="Chromosome 1"/>
</dbReference>
<dbReference type="GO" id="GO:0005737">
    <property type="term" value="C:cytoplasm"/>
    <property type="evidence" value="ECO:0000318"/>
    <property type="project" value="GO_Central"/>
</dbReference>
<dbReference type="GO" id="GO:0005634">
    <property type="term" value="C:nucleus"/>
    <property type="evidence" value="ECO:0007669"/>
    <property type="project" value="UniProtKB-SubCell"/>
</dbReference>
<dbReference type="GO" id="GO:0052689">
    <property type="term" value="F:carboxylic ester hydrolase activity"/>
    <property type="evidence" value="ECO:0000318"/>
    <property type="project" value="GO_Central"/>
</dbReference>
<dbReference type="GO" id="GO:0008474">
    <property type="term" value="F:palmitoyl-(protein) hydrolase activity"/>
    <property type="evidence" value="ECO:0000318"/>
    <property type="project" value="GO_Central"/>
</dbReference>
<dbReference type="GO" id="GO:0006631">
    <property type="term" value="P:fatty acid metabolic process"/>
    <property type="evidence" value="ECO:0007669"/>
    <property type="project" value="UniProtKB-KW"/>
</dbReference>
<dbReference type="FunFam" id="3.40.50.1820:FF:000010">
    <property type="entry name" value="Acyl-protein thioesterase 2"/>
    <property type="match status" value="1"/>
</dbReference>
<dbReference type="Gene3D" id="3.40.50.1820">
    <property type="entry name" value="alpha/beta hydrolase"/>
    <property type="match status" value="1"/>
</dbReference>
<dbReference type="InterPro" id="IPR029058">
    <property type="entry name" value="AB_hydrolase_fold"/>
</dbReference>
<dbReference type="InterPro" id="IPR050565">
    <property type="entry name" value="LYPA1-2/EST-like"/>
</dbReference>
<dbReference type="InterPro" id="IPR003140">
    <property type="entry name" value="PLipase/COase/thioEstase"/>
</dbReference>
<dbReference type="PANTHER" id="PTHR10655:SF17">
    <property type="entry name" value="LYSOPHOSPHOLIPASE-LIKE PROTEIN 1"/>
    <property type="match status" value="1"/>
</dbReference>
<dbReference type="PANTHER" id="PTHR10655">
    <property type="entry name" value="LYSOPHOSPHOLIPASE-RELATED"/>
    <property type="match status" value="1"/>
</dbReference>
<dbReference type="Pfam" id="PF02230">
    <property type="entry name" value="Abhydrolase_2"/>
    <property type="match status" value="1"/>
</dbReference>
<dbReference type="SUPFAM" id="SSF53474">
    <property type="entry name" value="alpha/beta-Hydrolases"/>
    <property type="match status" value="1"/>
</dbReference>
<protein>
    <recommendedName>
        <fullName>Acyl-protein thioesterase 1</fullName>
        <ecNumber evidence="2">3.1.2.-</ecNumber>
    </recommendedName>
    <alternativeName>
        <fullName>Palmitoyl-protein hydrolase</fullName>
        <ecNumber evidence="2">3.1.2.22</ecNumber>
    </alternativeName>
</protein>
<reference key="1">
    <citation type="journal article" date="2006" name="Nature">
        <title>Insights from the genome of the biotrophic fungal plant pathogen Ustilago maydis.</title>
        <authorList>
            <person name="Kaemper J."/>
            <person name="Kahmann R."/>
            <person name="Boelker M."/>
            <person name="Ma L.-J."/>
            <person name="Brefort T."/>
            <person name="Saville B.J."/>
            <person name="Banuett F."/>
            <person name="Kronstad J.W."/>
            <person name="Gold S.E."/>
            <person name="Mueller O."/>
            <person name="Perlin M.H."/>
            <person name="Woesten H.A.B."/>
            <person name="de Vries R."/>
            <person name="Ruiz-Herrera J."/>
            <person name="Reynaga-Pena C.G."/>
            <person name="Snetselaar K."/>
            <person name="McCann M."/>
            <person name="Perez-Martin J."/>
            <person name="Feldbruegge M."/>
            <person name="Basse C.W."/>
            <person name="Steinberg G."/>
            <person name="Ibeas J.I."/>
            <person name="Holloman W."/>
            <person name="Guzman P."/>
            <person name="Farman M.L."/>
            <person name="Stajich J.E."/>
            <person name="Sentandreu R."/>
            <person name="Gonzalez-Prieto J.M."/>
            <person name="Kennell J.C."/>
            <person name="Molina L."/>
            <person name="Schirawski J."/>
            <person name="Mendoza-Mendoza A."/>
            <person name="Greilinger D."/>
            <person name="Muench K."/>
            <person name="Roessel N."/>
            <person name="Scherer M."/>
            <person name="Vranes M."/>
            <person name="Ladendorf O."/>
            <person name="Vincon V."/>
            <person name="Fuchs U."/>
            <person name="Sandrock B."/>
            <person name="Meng S."/>
            <person name="Ho E.C.H."/>
            <person name="Cahill M.J."/>
            <person name="Boyce K.J."/>
            <person name="Klose J."/>
            <person name="Klosterman S.J."/>
            <person name="Deelstra H.J."/>
            <person name="Ortiz-Castellanos L."/>
            <person name="Li W."/>
            <person name="Sanchez-Alonso P."/>
            <person name="Schreier P.H."/>
            <person name="Haeuser-Hahn I."/>
            <person name="Vaupel M."/>
            <person name="Koopmann E."/>
            <person name="Friedrich G."/>
            <person name="Voss H."/>
            <person name="Schlueter T."/>
            <person name="Margolis J."/>
            <person name="Platt D."/>
            <person name="Swimmer C."/>
            <person name="Gnirke A."/>
            <person name="Chen F."/>
            <person name="Vysotskaia V."/>
            <person name="Mannhaupt G."/>
            <person name="Gueldener U."/>
            <person name="Muensterkoetter M."/>
            <person name="Haase D."/>
            <person name="Oesterheld M."/>
            <person name="Mewes H.-W."/>
            <person name="Mauceli E.W."/>
            <person name="DeCaprio D."/>
            <person name="Wade C.M."/>
            <person name="Butler J."/>
            <person name="Young S.K."/>
            <person name="Jaffe D.B."/>
            <person name="Calvo S.E."/>
            <person name="Nusbaum C."/>
            <person name="Galagan J.E."/>
            <person name="Birren B.W."/>
        </authorList>
    </citation>
    <scope>NUCLEOTIDE SEQUENCE [LARGE SCALE GENOMIC DNA]</scope>
    <source>
        <strain>DSM 14603 / FGSC 9021 / UM521</strain>
    </source>
</reference>
<reference key="2">
    <citation type="submission" date="2014-09" db="EMBL/GenBank/DDBJ databases">
        <authorList>
            <person name="Gueldener U."/>
            <person name="Muensterkoetter M."/>
            <person name="Walter M.C."/>
            <person name="Mannhaupt G."/>
            <person name="Kahmann R."/>
        </authorList>
    </citation>
    <scope>GENOME REANNOTATION</scope>
    <source>
        <strain>DSM 14603 / FGSC 9021 / UM521</strain>
    </source>
</reference>
<comment type="function">
    <text evidence="2">Hydrolyzes fatty acids from S-acylated cysteine residues in proteins with a strong preference for palmitoylated G-alpha proteins over other acyl substrates. Mediates the deacylation of G-alpha proteins such as GPA1 in vivo, but has weak or no activity toward palmitoylated Ras proteins. Has weak lysophospholipase activity in vitro; however such activity may not exist in vivo.</text>
</comment>
<comment type="catalytic activity">
    <reaction evidence="2">
        <text>S-hexadecanoyl-L-cysteinyl-[protein] + H2O = L-cysteinyl-[protein] + hexadecanoate + H(+)</text>
        <dbReference type="Rhea" id="RHEA:19233"/>
        <dbReference type="Rhea" id="RHEA-COMP:10131"/>
        <dbReference type="Rhea" id="RHEA-COMP:11032"/>
        <dbReference type="ChEBI" id="CHEBI:7896"/>
        <dbReference type="ChEBI" id="CHEBI:15377"/>
        <dbReference type="ChEBI" id="CHEBI:15378"/>
        <dbReference type="ChEBI" id="CHEBI:29950"/>
        <dbReference type="ChEBI" id="CHEBI:74151"/>
        <dbReference type="EC" id="3.1.2.22"/>
    </reaction>
</comment>
<comment type="subcellular location">
    <subcellularLocation>
        <location evidence="2">Cytoplasm</location>
    </subcellularLocation>
    <subcellularLocation>
        <location evidence="2">Nucleus</location>
    </subcellularLocation>
</comment>
<comment type="similarity">
    <text evidence="3">Belongs to the AB hydrolase superfamily. AB hydrolase 2 family.</text>
</comment>
<evidence type="ECO:0000250" key="1"/>
<evidence type="ECO:0000250" key="2">
    <source>
        <dbReference type="UniProtKB" id="Q12354"/>
    </source>
</evidence>
<evidence type="ECO:0000305" key="3"/>
<gene>
    <name type="ORF">UMAG_00130</name>
</gene>